<keyword id="KW-0027">Amidation</keyword>
<keyword id="KW-0903">Direct protein sequencing</keyword>
<keyword id="KW-1015">Disulfide bond</keyword>
<keyword id="KW-0372">Hormone</keyword>
<keyword id="KW-0964">Secreted</keyword>
<evidence type="ECO:0000250" key="1"/>
<evidence type="ECO:0000250" key="2">
    <source>
        <dbReference type="UniProtKB" id="P01175"/>
    </source>
</evidence>
<evidence type="ECO:0000250" key="3">
    <source>
        <dbReference type="UniProtKB" id="P01178"/>
    </source>
</evidence>
<evidence type="ECO:0000305" key="4"/>
<gene>
    <name type="primary">OXT</name>
</gene>
<accession>P69044</accession>
<accession>P01188</accession>
<accession>P32878</accession>
<organism>
    <name type="scientific">Hippopotamus amphibius</name>
    <name type="common">Hippopotamus</name>
    <dbReference type="NCBI Taxonomy" id="9833"/>
    <lineage>
        <taxon>Eukaryota</taxon>
        <taxon>Metazoa</taxon>
        <taxon>Chordata</taxon>
        <taxon>Craniata</taxon>
        <taxon>Vertebrata</taxon>
        <taxon>Euteleostomi</taxon>
        <taxon>Mammalia</taxon>
        <taxon>Eutheria</taxon>
        <taxon>Laurasiatheria</taxon>
        <taxon>Artiodactyla</taxon>
        <taxon>Whippomorpha</taxon>
        <taxon>Ancodonta</taxon>
        <taxon>Hippopotamidae</taxon>
        <taxon>Hippopotamus</taxon>
    </lineage>
</organism>
<feature type="peptide" id="PRO_0000044083" description="Oxytocin">
    <location>
        <begin position="1"/>
        <end position="9"/>
    </location>
</feature>
<feature type="modified residue" description="Glycine amide" evidence="1">
    <location>
        <position position="9"/>
    </location>
</feature>
<feature type="disulfide bond" evidence="2">
    <location>
        <begin position="1"/>
        <end position="6"/>
    </location>
</feature>
<protein>
    <recommendedName>
        <fullName>Oxytocin</fullName>
    </recommendedName>
    <alternativeName>
        <fullName>Ocytocin</fullName>
    </alternativeName>
</protein>
<name>NEU1_HIPAM</name>
<sequence>CYIQNCPLG</sequence>
<proteinExistence type="evidence at protein level"/>
<dbReference type="PIR" id="A91466">
    <property type="entry name" value="A91466"/>
</dbReference>
<dbReference type="SMR" id="P69044"/>
<dbReference type="GO" id="GO:0005576">
    <property type="term" value="C:extracellular region"/>
    <property type="evidence" value="ECO:0007669"/>
    <property type="project" value="UniProtKB-SubCell"/>
</dbReference>
<dbReference type="GO" id="GO:0005185">
    <property type="term" value="F:neurohypophyseal hormone activity"/>
    <property type="evidence" value="ECO:0007669"/>
    <property type="project" value="InterPro"/>
</dbReference>
<dbReference type="InterPro" id="IPR022423">
    <property type="entry name" value="Neurohypophysial_hormone_CS"/>
</dbReference>
<dbReference type="Pfam" id="PF00220">
    <property type="entry name" value="Hormone_4"/>
    <property type="match status" value="1"/>
</dbReference>
<dbReference type="PROSITE" id="PS00264">
    <property type="entry name" value="NEUROHYPOPHYS_HORM"/>
    <property type="match status" value="1"/>
</dbReference>
<comment type="function">
    <text evidence="3">Oxytocin causes contraction of the smooth muscle of the uterus and of the mammary gland. Acts by binding to oxytocin receptor (OXTR) (By similarity).</text>
</comment>
<comment type="subunit">
    <text evidence="3">Interacts with oxytocin receptor (Ki=1.5 nM) (By similarity). Interacts with vasopressin V1aR/AVPR1A (Ki=37 nM), V1bR/AVPR1B (Ki=222 nM), and V2R/AVPR2 receptors (Ki=823 nM) (By similarity).</text>
</comment>
<comment type="subcellular location">
    <subcellularLocation>
        <location>Secreted</location>
    </subcellularLocation>
</comment>
<comment type="similarity">
    <text evidence="4">Belongs to the vasopressin/oxytocin family.</text>
</comment>
<reference key="1">
    <citation type="journal article" date="1969" name="Gen. Comp. Endocrinol.">
        <title>Arginine and lysine vasopressins in the hippopotamus neurohypophysis.</title>
        <authorList>
            <person name="Ferguson D.R."/>
            <person name="Pickering B.T."/>
        </authorList>
    </citation>
    <scope>PROTEIN SEQUENCE</scope>
</reference>